<comment type="catalytic activity">
    <reaction evidence="1">
        <text>urea + 2 H2O + H(+) = hydrogencarbonate + 2 NH4(+)</text>
        <dbReference type="Rhea" id="RHEA:20557"/>
        <dbReference type="ChEBI" id="CHEBI:15377"/>
        <dbReference type="ChEBI" id="CHEBI:15378"/>
        <dbReference type="ChEBI" id="CHEBI:16199"/>
        <dbReference type="ChEBI" id="CHEBI:17544"/>
        <dbReference type="ChEBI" id="CHEBI:28938"/>
        <dbReference type="EC" id="3.5.1.5"/>
    </reaction>
</comment>
<comment type="pathway">
    <text evidence="1">Nitrogen metabolism; urea degradation; CO(2) and NH(3) from urea (urease route): step 1/1.</text>
</comment>
<comment type="subunit">
    <text evidence="1">Heterotrimer of UreA (gamma), UreB (beta) and UreC (alpha) subunits. Three heterotrimers associate to form the active enzyme.</text>
</comment>
<comment type="subcellular location">
    <subcellularLocation>
        <location evidence="1">Cytoplasm</location>
    </subcellularLocation>
</comment>
<comment type="similarity">
    <text evidence="1">Belongs to the urease beta subunit family.</text>
</comment>
<accession>Q8CND0</accession>
<feature type="chain" id="PRO_0000067593" description="Urease subunit beta">
    <location>
        <begin position="1"/>
        <end position="133"/>
    </location>
</feature>
<feature type="region of interest" description="Disordered" evidence="2">
    <location>
        <begin position="106"/>
        <end position="133"/>
    </location>
</feature>
<proteinExistence type="inferred from homology"/>
<keyword id="KW-0963">Cytoplasm</keyword>
<keyword id="KW-0378">Hydrolase</keyword>
<sequence length="133" mass="14916">MIPGEIIVKNTEIEVNKHHPETVIEVKNTGDRPIQVGSHFHFFEANKALEFDREKAYGKHLDIPAGAAVRFEPGDEKKVQLVEYSGRRKIYGFRGLVDGDIDEERVFRPNDSNQNAAVKNDAGEDNANKKGGK</sequence>
<reference key="1">
    <citation type="journal article" date="2003" name="Mol. Microbiol.">
        <title>Genome-based analysis of virulence genes in a non-biofilm-forming Staphylococcus epidermidis strain (ATCC 12228).</title>
        <authorList>
            <person name="Zhang Y.-Q."/>
            <person name="Ren S.-X."/>
            <person name="Li H.-L."/>
            <person name="Wang Y.-X."/>
            <person name="Fu G."/>
            <person name="Yang J."/>
            <person name="Qin Z.-Q."/>
            <person name="Miao Y.-G."/>
            <person name="Wang W.-Y."/>
            <person name="Chen R.-S."/>
            <person name="Shen Y."/>
            <person name="Chen Z."/>
            <person name="Yuan Z.-H."/>
            <person name="Zhao G.-P."/>
            <person name="Qu D."/>
            <person name="Danchin A."/>
            <person name="Wen Y.-M."/>
        </authorList>
    </citation>
    <scope>NUCLEOTIDE SEQUENCE [LARGE SCALE GENOMIC DNA]</scope>
    <source>
        <strain>ATCC 12228 / FDA PCI 1200</strain>
    </source>
</reference>
<organism>
    <name type="scientific">Staphylococcus epidermidis (strain ATCC 12228 / FDA PCI 1200)</name>
    <dbReference type="NCBI Taxonomy" id="176280"/>
    <lineage>
        <taxon>Bacteria</taxon>
        <taxon>Bacillati</taxon>
        <taxon>Bacillota</taxon>
        <taxon>Bacilli</taxon>
        <taxon>Bacillales</taxon>
        <taxon>Staphylococcaceae</taxon>
        <taxon>Staphylococcus</taxon>
    </lineage>
</organism>
<evidence type="ECO:0000255" key="1">
    <source>
        <dbReference type="HAMAP-Rule" id="MF_01954"/>
    </source>
</evidence>
<evidence type="ECO:0000256" key="2">
    <source>
        <dbReference type="SAM" id="MobiDB-lite"/>
    </source>
</evidence>
<dbReference type="EC" id="3.5.1.5" evidence="1"/>
<dbReference type="EMBL" id="AE015929">
    <property type="protein sequence ID" value="AAO05503.1"/>
    <property type="molecule type" value="Genomic_DNA"/>
</dbReference>
<dbReference type="RefSeq" id="NP_765417.1">
    <property type="nucleotide sequence ID" value="NC_004461.1"/>
</dbReference>
<dbReference type="RefSeq" id="WP_001832383.1">
    <property type="nucleotide sequence ID" value="NZ_WBME01000034.1"/>
</dbReference>
<dbReference type="SMR" id="Q8CND0"/>
<dbReference type="KEGG" id="sep:SE_1862"/>
<dbReference type="PATRIC" id="fig|176280.10.peg.1819"/>
<dbReference type="eggNOG" id="COG0832">
    <property type="taxonomic scope" value="Bacteria"/>
</dbReference>
<dbReference type="HOGENOM" id="CLU_129707_2_2_9"/>
<dbReference type="OrthoDB" id="9797217at2"/>
<dbReference type="UniPathway" id="UPA00258">
    <property type="reaction ID" value="UER00370"/>
</dbReference>
<dbReference type="Proteomes" id="UP000001411">
    <property type="component" value="Chromosome"/>
</dbReference>
<dbReference type="GO" id="GO:0035550">
    <property type="term" value="C:urease complex"/>
    <property type="evidence" value="ECO:0007669"/>
    <property type="project" value="InterPro"/>
</dbReference>
<dbReference type="GO" id="GO:0009039">
    <property type="term" value="F:urease activity"/>
    <property type="evidence" value="ECO:0007669"/>
    <property type="project" value="UniProtKB-UniRule"/>
</dbReference>
<dbReference type="GO" id="GO:0043419">
    <property type="term" value="P:urea catabolic process"/>
    <property type="evidence" value="ECO:0007669"/>
    <property type="project" value="UniProtKB-UniRule"/>
</dbReference>
<dbReference type="CDD" id="cd00407">
    <property type="entry name" value="Urease_beta"/>
    <property type="match status" value="1"/>
</dbReference>
<dbReference type="FunFam" id="2.10.150.10:FF:000001">
    <property type="entry name" value="Urease subunit beta"/>
    <property type="match status" value="1"/>
</dbReference>
<dbReference type="Gene3D" id="2.10.150.10">
    <property type="entry name" value="Urease, beta subunit"/>
    <property type="match status" value="1"/>
</dbReference>
<dbReference type="HAMAP" id="MF_01954">
    <property type="entry name" value="Urease_beta"/>
    <property type="match status" value="1"/>
</dbReference>
<dbReference type="InterPro" id="IPR002019">
    <property type="entry name" value="Urease_beta-like"/>
</dbReference>
<dbReference type="InterPro" id="IPR036461">
    <property type="entry name" value="Urease_betasu_sf"/>
</dbReference>
<dbReference type="InterPro" id="IPR050069">
    <property type="entry name" value="Urease_subunit"/>
</dbReference>
<dbReference type="NCBIfam" id="NF009682">
    <property type="entry name" value="PRK13203.1"/>
    <property type="match status" value="1"/>
</dbReference>
<dbReference type="NCBIfam" id="TIGR00192">
    <property type="entry name" value="urease_beta"/>
    <property type="match status" value="1"/>
</dbReference>
<dbReference type="PANTHER" id="PTHR33569">
    <property type="entry name" value="UREASE"/>
    <property type="match status" value="1"/>
</dbReference>
<dbReference type="PANTHER" id="PTHR33569:SF1">
    <property type="entry name" value="UREASE"/>
    <property type="match status" value="1"/>
</dbReference>
<dbReference type="Pfam" id="PF00699">
    <property type="entry name" value="Urease_beta"/>
    <property type="match status" value="1"/>
</dbReference>
<dbReference type="SUPFAM" id="SSF51278">
    <property type="entry name" value="Urease, beta-subunit"/>
    <property type="match status" value="1"/>
</dbReference>
<name>URE2_STAES</name>
<gene>
    <name evidence="1" type="primary">ureB</name>
    <name type="ordered locus">SE_1862</name>
</gene>
<protein>
    <recommendedName>
        <fullName evidence="1">Urease subunit beta</fullName>
        <ecNumber evidence="1">3.5.1.5</ecNumber>
    </recommendedName>
    <alternativeName>
        <fullName evidence="1">Urea amidohydrolase subunit beta</fullName>
    </alternativeName>
</protein>